<proteinExistence type="inferred from homology"/>
<reference key="1">
    <citation type="journal article" date="2012" name="Stand. Genomic Sci.">
        <title>Complete genome sequence of Polynucleobacter necessarius subsp. asymbioticus type strain (QLW-P1DMWA-1(T)).</title>
        <authorList>
            <person name="Meincke L."/>
            <person name="Copeland A."/>
            <person name="Lapidus A."/>
            <person name="Lucas S."/>
            <person name="Berry K.W."/>
            <person name="Del Rio T.G."/>
            <person name="Hammon N."/>
            <person name="Dalin E."/>
            <person name="Tice H."/>
            <person name="Pitluck S."/>
            <person name="Richardson P."/>
            <person name="Bruce D."/>
            <person name="Goodwin L."/>
            <person name="Han C."/>
            <person name="Tapia R."/>
            <person name="Detter J.C."/>
            <person name="Schmutz J."/>
            <person name="Brettin T."/>
            <person name="Larimer F."/>
            <person name="Land M."/>
            <person name="Hauser L."/>
            <person name="Kyrpides N.C."/>
            <person name="Ivanova N."/>
            <person name="Goker M."/>
            <person name="Woyke T."/>
            <person name="Wu Q.L."/>
            <person name="Pockl M."/>
            <person name="Hahn M.W."/>
            <person name="Klenk H.P."/>
        </authorList>
    </citation>
    <scope>NUCLEOTIDE SEQUENCE [LARGE SCALE GENOMIC DNA]</scope>
    <source>
        <strain>DSM 18221 / CIP 109841 / QLW-P1DMWA-1</strain>
    </source>
</reference>
<accession>A4SV64</accession>
<protein>
    <recommendedName>
        <fullName evidence="1">3-demethoxyubiquinol 3-hydroxylase</fullName>
        <shortName evidence="1">DMQ hydroxylase</shortName>
        <ecNumber evidence="1">1.14.99.60</ecNumber>
    </recommendedName>
    <alternativeName>
        <fullName evidence="1">2-nonaprenyl-3-methyl-6-methoxy-1,4-benzoquinol hydroxylase</fullName>
    </alternativeName>
</protein>
<sequence length="209" mass="23149">MSLIDRFIAEFDTALRSVVGGAHSRRPTPGSGEISHANLDVAQRKHAAGLMRVNHVGEVCAQALYQSQKMLARNPQIQVMLEHSGQEEMDHLAWCETRLQELGSHPSYLNPFWYAGSFAIGMLAGLAGDRWSLGFVAETEKQVENHLESHLETLPQEDLRSRAIVDQMRIDEIEHGQAALHAGGVVLPDPVQKVMQAMSKVMTTAAYRI</sequence>
<organism>
    <name type="scientific">Polynucleobacter asymbioticus (strain DSM 18221 / CIP 109841 / QLW-P1DMWA-1)</name>
    <name type="common">Polynucleobacter necessarius subsp. asymbioticus</name>
    <dbReference type="NCBI Taxonomy" id="312153"/>
    <lineage>
        <taxon>Bacteria</taxon>
        <taxon>Pseudomonadati</taxon>
        <taxon>Pseudomonadota</taxon>
        <taxon>Betaproteobacteria</taxon>
        <taxon>Burkholderiales</taxon>
        <taxon>Burkholderiaceae</taxon>
        <taxon>Polynucleobacter</taxon>
    </lineage>
</organism>
<feature type="chain" id="PRO_0000338706" description="3-demethoxyubiquinol 3-hydroxylase">
    <location>
        <begin position="1"/>
        <end position="209"/>
    </location>
</feature>
<feature type="binding site" evidence="1">
    <location>
        <position position="58"/>
    </location>
    <ligand>
        <name>Fe cation</name>
        <dbReference type="ChEBI" id="CHEBI:24875"/>
        <label>1</label>
    </ligand>
</feature>
<feature type="binding site" evidence="1">
    <location>
        <position position="88"/>
    </location>
    <ligand>
        <name>Fe cation</name>
        <dbReference type="ChEBI" id="CHEBI:24875"/>
        <label>1</label>
    </ligand>
</feature>
<feature type="binding site" evidence="1">
    <location>
        <position position="88"/>
    </location>
    <ligand>
        <name>Fe cation</name>
        <dbReference type="ChEBI" id="CHEBI:24875"/>
        <label>2</label>
    </ligand>
</feature>
<feature type="binding site" evidence="1">
    <location>
        <position position="91"/>
    </location>
    <ligand>
        <name>Fe cation</name>
        <dbReference type="ChEBI" id="CHEBI:24875"/>
        <label>1</label>
    </ligand>
</feature>
<feature type="binding site" evidence="1">
    <location>
        <position position="140"/>
    </location>
    <ligand>
        <name>Fe cation</name>
        <dbReference type="ChEBI" id="CHEBI:24875"/>
        <label>2</label>
    </ligand>
</feature>
<feature type="binding site" evidence="1">
    <location>
        <position position="172"/>
    </location>
    <ligand>
        <name>Fe cation</name>
        <dbReference type="ChEBI" id="CHEBI:24875"/>
        <label>1</label>
    </ligand>
</feature>
<feature type="binding site" evidence="1">
    <location>
        <position position="172"/>
    </location>
    <ligand>
        <name>Fe cation</name>
        <dbReference type="ChEBI" id="CHEBI:24875"/>
        <label>2</label>
    </ligand>
</feature>
<feature type="binding site" evidence="1">
    <location>
        <position position="175"/>
    </location>
    <ligand>
        <name>Fe cation</name>
        <dbReference type="ChEBI" id="CHEBI:24875"/>
        <label>2</label>
    </ligand>
</feature>
<gene>
    <name evidence="1" type="primary">coq7</name>
    <name type="ordered locus">Pnuc_0157</name>
</gene>
<name>COQ7_POLAQ</name>
<dbReference type="EC" id="1.14.99.60" evidence="1"/>
<dbReference type="EMBL" id="CP000655">
    <property type="protein sequence ID" value="ABP33378.1"/>
    <property type="molecule type" value="Genomic_DNA"/>
</dbReference>
<dbReference type="RefSeq" id="WP_011902003.1">
    <property type="nucleotide sequence ID" value="NC_009379.1"/>
</dbReference>
<dbReference type="SMR" id="A4SV64"/>
<dbReference type="GeneID" id="31480506"/>
<dbReference type="KEGG" id="pnu:Pnuc_0157"/>
<dbReference type="eggNOG" id="COG2941">
    <property type="taxonomic scope" value="Bacteria"/>
</dbReference>
<dbReference type="HOGENOM" id="CLU_088601_0_0_4"/>
<dbReference type="UniPathway" id="UPA00232"/>
<dbReference type="Proteomes" id="UP000000231">
    <property type="component" value="Chromosome"/>
</dbReference>
<dbReference type="GO" id="GO:0005886">
    <property type="term" value="C:plasma membrane"/>
    <property type="evidence" value="ECO:0007669"/>
    <property type="project" value="UniProtKB-SubCell"/>
</dbReference>
<dbReference type="GO" id="GO:0008682">
    <property type="term" value="F:3-demethoxyubiquinol 3-hydroxylase activity"/>
    <property type="evidence" value="ECO:0007669"/>
    <property type="project" value="UniProtKB-EC"/>
</dbReference>
<dbReference type="GO" id="GO:0046872">
    <property type="term" value="F:metal ion binding"/>
    <property type="evidence" value="ECO:0007669"/>
    <property type="project" value="UniProtKB-KW"/>
</dbReference>
<dbReference type="GO" id="GO:0006744">
    <property type="term" value="P:ubiquinone biosynthetic process"/>
    <property type="evidence" value="ECO:0007669"/>
    <property type="project" value="UniProtKB-UniRule"/>
</dbReference>
<dbReference type="CDD" id="cd01042">
    <property type="entry name" value="DMQH"/>
    <property type="match status" value="1"/>
</dbReference>
<dbReference type="Gene3D" id="1.20.1260.10">
    <property type="match status" value="1"/>
</dbReference>
<dbReference type="HAMAP" id="MF_01658">
    <property type="entry name" value="COQ7"/>
    <property type="match status" value="1"/>
</dbReference>
<dbReference type="InterPro" id="IPR047809">
    <property type="entry name" value="COQ7_proteobact"/>
</dbReference>
<dbReference type="InterPro" id="IPR012347">
    <property type="entry name" value="Ferritin-like"/>
</dbReference>
<dbReference type="InterPro" id="IPR009078">
    <property type="entry name" value="Ferritin-like_SF"/>
</dbReference>
<dbReference type="InterPro" id="IPR011566">
    <property type="entry name" value="Ubq_synth_Coq7"/>
</dbReference>
<dbReference type="NCBIfam" id="NF033656">
    <property type="entry name" value="DMQ_monoox_COQ7"/>
    <property type="match status" value="1"/>
</dbReference>
<dbReference type="PANTHER" id="PTHR11237:SF4">
    <property type="entry name" value="5-DEMETHOXYUBIQUINONE HYDROXYLASE, MITOCHONDRIAL"/>
    <property type="match status" value="1"/>
</dbReference>
<dbReference type="PANTHER" id="PTHR11237">
    <property type="entry name" value="COENZYME Q10 BIOSYNTHESIS PROTEIN 7"/>
    <property type="match status" value="1"/>
</dbReference>
<dbReference type="Pfam" id="PF03232">
    <property type="entry name" value="COQ7"/>
    <property type="match status" value="1"/>
</dbReference>
<dbReference type="SUPFAM" id="SSF47240">
    <property type="entry name" value="Ferritin-like"/>
    <property type="match status" value="1"/>
</dbReference>
<comment type="function">
    <text evidence="1">Catalyzes the hydroxylation of 2-nonaprenyl-3-methyl-6-methoxy-1,4-benzoquinol during ubiquinone biosynthesis.</text>
</comment>
<comment type="catalytic activity">
    <reaction evidence="1">
        <text>a 5-methoxy-2-methyl-3-(all-trans-polyprenyl)benzene-1,4-diol + AH2 + O2 = a 3-demethylubiquinol + A + H2O</text>
        <dbReference type="Rhea" id="RHEA:50908"/>
        <dbReference type="Rhea" id="RHEA-COMP:10859"/>
        <dbReference type="Rhea" id="RHEA-COMP:10914"/>
        <dbReference type="ChEBI" id="CHEBI:13193"/>
        <dbReference type="ChEBI" id="CHEBI:15377"/>
        <dbReference type="ChEBI" id="CHEBI:15379"/>
        <dbReference type="ChEBI" id="CHEBI:17499"/>
        <dbReference type="ChEBI" id="CHEBI:84167"/>
        <dbReference type="ChEBI" id="CHEBI:84422"/>
        <dbReference type="EC" id="1.14.99.60"/>
    </reaction>
</comment>
<comment type="cofactor">
    <cofactor evidence="1">
        <name>Fe cation</name>
        <dbReference type="ChEBI" id="CHEBI:24875"/>
    </cofactor>
    <text evidence="1">Binds 2 iron ions per subunit.</text>
</comment>
<comment type="pathway">
    <text evidence="1">Cofactor biosynthesis; ubiquinone biosynthesis.</text>
</comment>
<comment type="subcellular location">
    <subcellularLocation>
        <location evidence="1">Cell membrane</location>
        <topology evidence="1">Peripheral membrane protein</topology>
    </subcellularLocation>
</comment>
<comment type="similarity">
    <text evidence="1">Belongs to the COQ7 family.</text>
</comment>
<keyword id="KW-1003">Cell membrane</keyword>
<keyword id="KW-0408">Iron</keyword>
<keyword id="KW-0472">Membrane</keyword>
<keyword id="KW-0479">Metal-binding</keyword>
<keyword id="KW-0503">Monooxygenase</keyword>
<keyword id="KW-0560">Oxidoreductase</keyword>
<keyword id="KW-1185">Reference proteome</keyword>
<keyword id="KW-0831">Ubiquinone biosynthesis</keyword>
<evidence type="ECO:0000255" key="1">
    <source>
        <dbReference type="HAMAP-Rule" id="MF_01658"/>
    </source>
</evidence>